<comment type="function">
    <text evidence="1">Plays a role in virus cell tropism, and may be required for efficient virus replication in macrophages.</text>
</comment>
<comment type="similarity">
    <text evidence="3">Belongs to the asfivirus MGF 110 family.</text>
</comment>
<sequence length="125" mass="14238">MLVIILGVIGLLASSNLVSSSTSTRVGGHLPLTFDPPENELGYWYTYVESCRFCWDCEDGVCTSRVWGNNSTSIVENDYVKYCEVSRWGDQCRYDVEEHIYYTMNCSDPKPWNPYKIAKEGVEKG</sequence>
<feature type="signal peptide" evidence="2">
    <location>
        <begin position="1"/>
        <end position="20"/>
    </location>
</feature>
<feature type="chain" id="PRO_0000373205" description="Protein MGF 110-7L">
    <location>
        <begin position="21"/>
        <end position="125"/>
    </location>
</feature>
<feature type="glycosylation site" description="N-linked (GlcNAc...) asparagine; by host" evidence="2">
    <location>
        <position position="69"/>
    </location>
</feature>
<feature type="glycosylation site" description="N-linked (GlcNAc...) asparagine; by host" evidence="2">
    <location>
        <position position="70"/>
    </location>
</feature>
<feature type="glycosylation site" description="N-linked (GlcNAc...) asparagine; by host" evidence="2">
    <location>
        <position position="105"/>
    </location>
</feature>
<keyword id="KW-0325">Glycoprotein</keyword>
<keyword id="KW-0732">Signal</keyword>
<proteinExistence type="inferred from homology"/>
<organismHost>
    <name type="scientific">Ornithodoros</name>
    <name type="common">relapsing fever ticks</name>
    <dbReference type="NCBI Taxonomy" id="6937"/>
</organismHost>
<organismHost>
    <name type="scientific">Phacochoerus aethiopicus</name>
    <name type="common">Warthog</name>
    <dbReference type="NCBI Taxonomy" id="85517"/>
</organismHost>
<organismHost>
    <name type="scientific">Phacochoerus africanus</name>
    <name type="common">Warthog</name>
    <dbReference type="NCBI Taxonomy" id="41426"/>
</organismHost>
<organismHost>
    <name type="scientific">Potamochoerus larvatus</name>
    <name type="common">Bushpig</name>
    <dbReference type="NCBI Taxonomy" id="273792"/>
</organismHost>
<organismHost>
    <name type="scientific">Sus scrofa</name>
    <name type="common">Pig</name>
    <dbReference type="NCBI Taxonomy" id="9823"/>
</organismHost>
<gene>
    <name type="ordered locus">Mal-013</name>
</gene>
<accession>P0C9I3</accession>
<protein>
    <recommendedName>
        <fullName>Protein MGF 110-7L</fullName>
    </recommendedName>
</protein>
<name>1107L_ASFM2</name>
<evidence type="ECO:0000250" key="1"/>
<evidence type="ECO:0000255" key="2"/>
<evidence type="ECO:0000305" key="3"/>
<reference key="1">
    <citation type="submission" date="2003-03" db="EMBL/GenBank/DDBJ databases">
        <title>African swine fever virus genomes.</title>
        <authorList>
            <person name="Kutish G.F."/>
            <person name="Rock D.L."/>
        </authorList>
    </citation>
    <scope>NUCLEOTIDE SEQUENCE [LARGE SCALE GENOMIC DNA]</scope>
</reference>
<organism>
    <name type="scientific">African swine fever virus (isolate Tick/Malawi/Lil 20-1/1983)</name>
    <name type="common">ASFV</name>
    <dbReference type="NCBI Taxonomy" id="10500"/>
    <lineage>
        <taxon>Viruses</taxon>
        <taxon>Varidnaviria</taxon>
        <taxon>Bamfordvirae</taxon>
        <taxon>Nucleocytoviricota</taxon>
        <taxon>Pokkesviricetes</taxon>
        <taxon>Asfuvirales</taxon>
        <taxon>Asfarviridae</taxon>
        <taxon>Asfivirus</taxon>
        <taxon>African swine fever virus</taxon>
    </lineage>
</organism>
<dbReference type="EMBL" id="AY261361">
    <property type="status" value="NOT_ANNOTATED_CDS"/>
    <property type="molecule type" value="Genomic_DNA"/>
</dbReference>
<dbReference type="Proteomes" id="UP000000860">
    <property type="component" value="Segment"/>
</dbReference>
<dbReference type="InterPro" id="IPR004848">
    <property type="entry name" value="ASFV_fam_110"/>
</dbReference>
<dbReference type="Pfam" id="PF01639">
    <property type="entry name" value="v110"/>
    <property type="match status" value="1"/>
</dbReference>